<organismHost>
    <name type="scientific">Homo sapiens</name>
    <name type="common">Human</name>
    <dbReference type="NCBI Taxonomy" id="9606"/>
</organismHost>
<protein>
    <recommendedName>
        <fullName>Minor capsid protein VP2</fullName>
    </recommendedName>
</protein>
<name>VP2_SVM10</name>
<dbReference type="EMBL" id="AY237420">
    <property type="protein sequence ID" value="AAQ17059.2"/>
    <property type="molecule type" value="mRNA"/>
</dbReference>
<dbReference type="RefSeq" id="YP_022763.1">
    <property type="nucleotide sequence ID" value="NC_010624.1"/>
</dbReference>
<dbReference type="KEGG" id="vg:2943312"/>
<dbReference type="OrthoDB" id="34562at10239"/>
<dbReference type="Proteomes" id="UP000112655">
    <property type="component" value="Genome"/>
</dbReference>
<dbReference type="GO" id="GO:0030430">
    <property type="term" value="C:host cell cytoplasm"/>
    <property type="evidence" value="ECO:0007669"/>
    <property type="project" value="UniProtKB-SubCell"/>
</dbReference>
<dbReference type="GO" id="GO:0098021">
    <property type="term" value="C:viral capsid, decoration"/>
    <property type="evidence" value="ECO:0007669"/>
    <property type="project" value="UniProtKB-KW"/>
</dbReference>
<dbReference type="InterPro" id="IPR008437">
    <property type="entry name" value="Minor_structural_calicivir"/>
</dbReference>
<dbReference type="Pfam" id="PF05752">
    <property type="entry name" value="Calici_MSP"/>
    <property type="match status" value="1"/>
</dbReference>
<keyword id="KW-1232">Capsid decoration protein</keyword>
<keyword id="KW-0167">Capsid protein</keyword>
<keyword id="KW-1035">Host cytoplasm</keyword>
<keyword id="KW-0946">Virion</keyword>
<organism>
    <name type="scientific">Sapporo virus (isolate GII/Human/Thailand/Mc10/2000)</name>
    <name type="common">Hu/SaV/Mc10/2000/Thailand</name>
    <dbReference type="NCBI Taxonomy" id="234601"/>
    <lineage>
        <taxon>Viruses</taxon>
        <taxon>Riboviria</taxon>
        <taxon>Orthornavirae</taxon>
        <taxon>Pisuviricota</taxon>
        <taxon>Pisoniviricetes</taxon>
        <taxon>Picornavirales</taxon>
        <taxon>Caliciviridae</taxon>
        <taxon>Sapovirus</taxon>
        <taxon>Sapporo virus</taxon>
    </lineage>
</organism>
<sequence length="166" mass="17697">MSWFTGASLAAGSLVDMAGTISSIVAQQRQIDLMAEANRIQADWVRRQEALQIRGQDISRDLAVNGTAQRVESLVNAGFTPVDARRLAGGTETVSYGLLDRPILQRGILSGITETRHLQAMQGALSAFKNGASYGAPPAPSGFVNPNYQPSPPRLKLGPRPPSTNV</sequence>
<evidence type="ECO:0000250" key="1">
    <source>
        <dbReference type="UniProtKB" id="P28711"/>
    </source>
</evidence>
<evidence type="ECO:0000256" key="2">
    <source>
        <dbReference type="SAM" id="MobiDB-lite"/>
    </source>
</evidence>
<evidence type="ECO:0000305" key="3"/>
<comment type="function">
    <text evidence="1">Minor structural protein that forms a portal-like structure at a unique three-fold axis of symmetry, following binding to the host receptor. The channel formed by VP2 may allow the delivery of the viral genome through the host endosomal membrane.</text>
</comment>
<comment type="subunit">
    <text evidence="1">Homooligomer. The portal-like structure consists in 12 copies of VP2. Interacts with capsid protein VP1.</text>
</comment>
<comment type="subcellular location">
    <subcellularLocation>
        <location evidence="1">Virion</location>
    </subcellularLocation>
    <subcellularLocation>
        <location evidence="3">Host cytoplasm</location>
    </subcellularLocation>
</comment>
<comment type="domain">
    <text evidence="1">The N-terminus domain points away from the virion surface.</text>
</comment>
<comment type="miscellaneous">
    <text evidence="1">Translated by a ribosomal termination-reinitiation process from the bicistronic mRNA coding for VP1 and VP2.</text>
</comment>
<comment type="similarity">
    <text evidence="3">Belongs to the vesivirus VP2 protein family.</text>
</comment>
<feature type="chain" id="PRO_0000342118" description="Minor capsid protein VP2">
    <location>
        <begin position="1"/>
        <end position="166"/>
    </location>
</feature>
<feature type="region of interest" description="Disordered" evidence="2">
    <location>
        <begin position="138"/>
        <end position="166"/>
    </location>
</feature>
<feature type="compositionally biased region" description="Pro residues" evidence="2">
    <location>
        <begin position="149"/>
        <end position="166"/>
    </location>
</feature>
<reference key="1">
    <citation type="journal article" date="2005" name="J. Virol.">
        <title>Proteolytic processing of sapovirus ORF1 polyprotein.</title>
        <authorList>
            <person name="Oka T."/>
            <person name="Katayama K."/>
            <person name="Ogawa S."/>
            <person name="Hansman G.S."/>
            <person name="Kageyama T."/>
            <person name="Ushijima H."/>
            <person name="Miyamura T."/>
            <person name="Takeda N."/>
        </authorList>
    </citation>
    <scope>NUCLEOTIDE SEQUENCE [GENOMIC RNA]</scope>
</reference>
<gene>
    <name type="ORF">ORF2</name>
</gene>
<proteinExistence type="evidence at transcript level"/>
<accession>Q6XDK7</accession>